<keyword id="KW-0131">Cell cycle</keyword>
<keyword id="KW-0132">Cell division</keyword>
<keyword id="KW-0175">Coiled coil</keyword>
<keyword id="KW-0963">Cytoplasm</keyword>
<keyword id="KW-0717">Septation</keyword>
<reference key="1">
    <citation type="journal article" date="2010" name="PLoS Genet.">
        <title>Genome sequence of the plant growth promoting endophytic bacterium Enterobacter sp. 638.</title>
        <authorList>
            <person name="Taghavi S."/>
            <person name="van der Lelie D."/>
            <person name="Hoffman A."/>
            <person name="Zhang Y.B."/>
            <person name="Walla M.D."/>
            <person name="Vangronsveld J."/>
            <person name="Newman L."/>
            <person name="Monchy S."/>
        </authorList>
    </citation>
    <scope>NUCLEOTIDE SEQUENCE [LARGE SCALE GENOMIC DNA]</scope>
    <source>
        <strain>638</strain>
    </source>
</reference>
<sequence>MSAQPVDLQIFGRSLRVNCPPEQRDALSQAADDLNQRLQDLKERTRVTNTEQLVFIAALNISYELTQEKAKTRDYAASMEQRIKMLQQTIEQALLDQGRTPERPGQKFE</sequence>
<protein>
    <recommendedName>
        <fullName evidence="1">Cell division protein ZapA</fullName>
    </recommendedName>
    <alternativeName>
        <fullName evidence="1">Z ring-associated protein ZapA</fullName>
    </alternativeName>
</protein>
<proteinExistence type="inferred from homology"/>
<name>ZAPA_ENT38</name>
<comment type="function">
    <text evidence="1">Activator of cell division through the inhibition of FtsZ GTPase activity, therefore promoting FtsZ assembly into bundles of protofilaments necessary for the formation of the division Z ring. It is recruited early at mid-cell but it is not essential for cell division.</text>
</comment>
<comment type="subunit">
    <text evidence="1">Homodimer. Interacts with FtsZ.</text>
</comment>
<comment type="subcellular location">
    <subcellularLocation>
        <location evidence="1">Cytoplasm</location>
    </subcellularLocation>
    <text evidence="1">Localizes at mid-cell.</text>
</comment>
<comment type="similarity">
    <text evidence="1">Belongs to the ZapA family. Type 1 subfamily.</text>
</comment>
<dbReference type="EMBL" id="CP000653">
    <property type="protein sequence ID" value="ABP61992.1"/>
    <property type="molecule type" value="Genomic_DNA"/>
</dbReference>
<dbReference type="RefSeq" id="WP_015960320.1">
    <property type="nucleotide sequence ID" value="NC_009436.1"/>
</dbReference>
<dbReference type="SMR" id="A4WE62"/>
<dbReference type="STRING" id="399742.Ent638_3329"/>
<dbReference type="GeneID" id="93306295"/>
<dbReference type="KEGG" id="ent:Ent638_3329"/>
<dbReference type="eggNOG" id="COG3027">
    <property type="taxonomic scope" value="Bacteria"/>
</dbReference>
<dbReference type="HOGENOM" id="CLU_116623_3_0_6"/>
<dbReference type="OrthoDB" id="5917174at2"/>
<dbReference type="Proteomes" id="UP000000230">
    <property type="component" value="Chromosome"/>
</dbReference>
<dbReference type="GO" id="GO:0032153">
    <property type="term" value="C:cell division site"/>
    <property type="evidence" value="ECO:0007669"/>
    <property type="project" value="TreeGrafter"/>
</dbReference>
<dbReference type="GO" id="GO:0030428">
    <property type="term" value="C:cell septum"/>
    <property type="evidence" value="ECO:0007669"/>
    <property type="project" value="TreeGrafter"/>
</dbReference>
<dbReference type="GO" id="GO:0005829">
    <property type="term" value="C:cytosol"/>
    <property type="evidence" value="ECO:0007669"/>
    <property type="project" value="TreeGrafter"/>
</dbReference>
<dbReference type="GO" id="GO:0005886">
    <property type="term" value="C:plasma membrane"/>
    <property type="evidence" value="ECO:0007669"/>
    <property type="project" value="UniProtKB-UniRule"/>
</dbReference>
<dbReference type="GO" id="GO:0000917">
    <property type="term" value="P:division septum assembly"/>
    <property type="evidence" value="ECO:0007669"/>
    <property type="project" value="UniProtKB-KW"/>
</dbReference>
<dbReference type="GO" id="GO:0043093">
    <property type="term" value="P:FtsZ-dependent cytokinesis"/>
    <property type="evidence" value="ECO:0007669"/>
    <property type="project" value="TreeGrafter"/>
</dbReference>
<dbReference type="GO" id="GO:0000921">
    <property type="term" value="P:septin ring assembly"/>
    <property type="evidence" value="ECO:0007669"/>
    <property type="project" value="TreeGrafter"/>
</dbReference>
<dbReference type="FunFam" id="1.20.5.50:FF:000001">
    <property type="entry name" value="Cell division protein ZapA"/>
    <property type="match status" value="1"/>
</dbReference>
<dbReference type="FunFam" id="3.30.160.880:FF:000001">
    <property type="entry name" value="Cell division protein ZapA"/>
    <property type="match status" value="1"/>
</dbReference>
<dbReference type="Gene3D" id="1.20.5.50">
    <property type="match status" value="1"/>
</dbReference>
<dbReference type="Gene3D" id="3.30.160.880">
    <property type="entry name" value="Cell division protein ZapA protomer, N-terminal domain"/>
    <property type="match status" value="1"/>
</dbReference>
<dbReference type="HAMAP" id="MF_02012">
    <property type="entry name" value="ZapA_type1"/>
    <property type="match status" value="1"/>
</dbReference>
<dbReference type="InterPro" id="IPR007838">
    <property type="entry name" value="Cell_div_ZapA-like"/>
</dbReference>
<dbReference type="InterPro" id="IPR036192">
    <property type="entry name" value="Cell_div_ZapA-like_sf"/>
</dbReference>
<dbReference type="InterPro" id="IPR023771">
    <property type="entry name" value="Cell_div_ZapA_eubact"/>
</dbReference>
<dbReference type="InterPro" id="IPR042233">
    <property type="entry name" value="Cell_div_ZapA_N"/>
</dbReference>
<dbReference type="NCBIfam" id="NF008209">
    <property type="entry name" value="PRK10972.1"/>
    <property type="match status" value="1"/>
</dbReference>
<dbReference type="PANTHER" id="PTHR34981">
    <property type="entry name" value="CELL DIVISION PROTEIN ZAPA"/>
    <property type="match status" value="1"/>
</dbReference>
<dbReference type="PANTHER" id="PTHR34981:SF1">
    <property type="entry name" value="CELL DIVISION PROTEIN ZAPA"/>
    <property type="match status" value="1"/>
</dbReference>
<dbReference type="Pfam" id="PF05164">
    <property type="entry name" value="ZapA"/>
    <property type="match status" value="1"/>
</dbReference>
<dbReference type="SUPFAM" id="SSF102829">
    <property type="entry name" value="Cell division protein ZapA-like"/>
    <property type="match status" value="1"/>
</dbReference>
<feature type="chain" id="PRO_0000345640" description="Cell division protein ZapA">
    <location>
        <begin position="1"/>
        <end position="109"/>
    </location>
</feature>
<feature type="coiled-coil region" evidence="1">
    <location>
        <begin position="21"/>
        <end position="97"/>
    </location>
</feature>
<evidence type="ECO:0000255" key="1">
    <source>
        <dbReference type="HAMAP-Rule" id="MF_02012"/>
    </source>
</evidence>
<organism>
    <name type="scientific">Enterobacter sp. (strain 638)</name>
    <dbReference type="NCBI Taxonomy" id="399742"/>
    <lineage>
        <taxon>Bacteria</taxon>
        <taxon>Pseudomonadati</taxon>
        <taxon>Pseudomonadota</taxon>
        <taxon>Gammaproteobacteria</taxon>
        <taxon>Enterobacterales</taxon>
        <taxon>Enterobacteriaceae</taxon>
        <taxon>Enterobacter</taxon>
    </lineage>
</organism>
<gene>
    <name evidence="1" type="primary">zapA</name>
    <name type="ordered locus">Ent638_3329</name>
</gene>
<accession>A4WE62</accession>